<reference key="1">
    <citation type="journal article" date="2004" name="Science">
        <title>A predator unmasked: life cycle of Bdellovibrio bacteriovorus from a genomic perspective.</title>
        <authorList>
            <person name="Rendulic S."/>
            <person name="Jagtap P."/>
            <person name="Rosinus A."/>
            <person name="Eppinger M."/>
            <person name="Baar C."/>
            <person name="Lanz C."/>
            <person name="Keller H."/>
            <person name="Lambert C."/>
            <person name="Evans K.J."/>
            <person name="Goesmann A."/>
            <person name="Meyer F."/>
            <person name="Sockett R.E."/>
            <person name="Schuster S.C."/>
        </authorList>
    </citation>
    <scope>NUCLEOTIDE SEQUENCE [LARGE SCALE GENOMIC DNA]</scope>
    <source>
        <strain>ATCC 15356 / DSM 50701 / NCIMB 9529 / HD100</strain>
    </source>
</reference>
<comment type="function">
    <text evidence="1">ATP-dependent serine protease that mediates the selective degradation of mutant and abnormal proteins as well as certain short-lived regulatory proteins. Required for cellular homeostasis and for survival from DNA damage and developmental changes induced by stress. Degrades polypeptides processively to yield small peptide fragments that are 5 to 10 amino acids long. Binds to DNA in a double-stranded, site-specific manner.</text>
</comment>
<comment type="catalytic activity">
    <reaction evidence="1">
        <text>Hydrolysis of proteins in presence of ATP.</text>
        <dbReference type="EC" id="3.4.21.53"/>
    </reaction>
</comment>
<comment type="subunit">
    <text evidence="1">Homohexamer. Organized in a ring with a central cavity.</text>
</comment>
<comment type="subcellular location">
    <subcellularLocation>
        <location evidence="1">Cytoplasm</location>
    </subcellularLocation>
</comment>
<comment type="induction">
    <text evidence="1">By heat shock.</text>
</comment>
<comment type="similarity">
    <text evidence="1">Belongs to the peptidase S16 family.</text>
</comment>
<sequence>MSFDDKVLEIPQTLPMLPVRDIVVFPYMIIPLFVGRDASIRSVEEALAKNRLIFLASQKDITEENPSPDNIYTVGTVAMIMRMRKLSDGRVKILIQGVAKGRVKNFTKTSPSFEVAVEKIEETPVQKTVVENEALIRTAKEHIERIIALGRPLSPDILLVLDDVSDPGRIADLIASNLGIKVQDAQKVLETSDATERLKLVNEILAAELEVMQTQSKNRTGAKDDMSKSQREYFLREQMKAIKNELGEGDSKSEEMDELREKLVNAGMPTHVEAEALKQLGRLERMHPDASEATMVRTYLDWMADLPWSKKSEDHIDLKRSKEILDEDHYELEKAKDRIMEFLAVRKLKPNLKGPILCFGGPPGVGKTSLGKSIARAMGREYFRIALGGVKDEAEIRGHRRTYVGAMPGKIIQALRQAKTSNPVIVLDEIDKLGSDFRGDPSAAMLEVLDPEQNATFRDNYLNVDFDLSNVLFIATANVLENIPPALRDRMEILNIPGYTENDKLLITKKHLIKRQIEANGITEENIKFTDEGIKYLIAGYTREAGLRNLEREVGSVCRKVAKMVVMEETNFVEVNATTVPELLGPPRFQRDDKIADSQVGVVQGLAWTQAGGEVLTIEALKMKGKGHLALTGQLGDVMKESAHAAMSYARAHQEELGIPEDFFEKYDVHVHLPAGAIPKDGPSAGITLTTALVSLMTGTPVRHDIAMTGEVTLQGRVLPVGGIREKCLAALNLGITNIIIPMACQKDLADIPKVFKDKINFILAENLDEVFAVAFDKSAKGQEKKPAAKKDPKKTKSLAA</sequence>
<evidence type="ECO:0000255" key="1">
    <source>
        <dbReference type="HAMAP-Rule" id="MF_01973"/>
    </source>
</evidence>
<evidence type="ECO:0000255" key="2">
    <source>
        <dbReference type="PROSITE-ProRule" id="PRU01122"/>
    </source>
</evidence>
<evidence type="ECO:0000255" key="3">
    <source>
        <dbReference type="PROSITE-ProRule" id="PRU01123"/>
    </source>
</evidence>
<evidence type="ECO:0000256" key="4">
    <source>
        <dbReference type="SAM" id="MobiDB-lite"/>
    </source>
</evidence>
<accession>Q6MGP8</accession>
<keyword id="KW-0067">ATP-binding</keyword>
<keyword id="KW-0963">Cytoplasm</keyword>
<keyword id="KW-0378">Hydrolase</keyword>
<keyword id="KW-0547">Nucleotide-binding</keyword>
<keyword id="KW-0645">Protease</keyword>
<keyword id="KW-1185">Reference proteome</keyword>
<keyword id="KW-0720">Serine protease</keyword>
<keyword id="KW-0346">Stress response</keyword>
<organism>
    <name type="scientific">Bdellovibrio bacteriovorus (strain ATCC 15356 / DSM 50701 / NCIMB 9529 / HD100)</name>
    <dbReference type="NCBI Taxonomy" id="264462"/>
    <lineage>
        <taxon>Bacteria</taxon>
        <taxon>Pseudomonadati</taxon>
        <taxon>Bdellovibrionota</taxon>
        <taxon>Bdellovibrionia</taxon>
        <taxon>Bdellovibrionales</taxon>
        <taxon>Pseudobdellovibrionaceae</taxon>
        <taxon>Bdellovibrio</taxon>
    </lineage>
</organism>
<dbReference type="EC" id="3.4.21.53" evidence="1"/>
<dbReference type="EMBL" id="BX842656">
    <property type="protein sequence ID" value="CAE81231.1"/>
    <property type="molecule type" value="Genomic_DNA"/>
</dbReference>
<dbReference type="RefSeq" id="WP_011166174.1">
    <property type="nucleotide sequence ID" value="NC_005363.1"/>
</dbReference>
<dbReference type="SMR" id="Q6MGP8"/>
<dbReference type="STRING" id="264462.Bd3876"/>
<dbReference type="MEROPS" id="S16.001"/>
<dbReference type="GeneID" id="93014642"/>
<dbReference type="KEGG" id="bba:Bd3876"/>
<dbReference type="eggNOG" id="COG0466">
    <property type="taxonomic scope" value="Bacteria"/>
</dbReference>
<dbReference type="HOGENOM" id="CLU_004109_4_3_7"/>
<dbReference type="Proteomes" id="UP000008080">
    <property type="component" value="Chromosome"/>
</dbReference>
<dbReference type="GO" id="GO:0005737">
    <property type="term" value="C:cytoplasm"/>
    <property type="evidence" value="ECO:0007669"/>
    <property type="project" value="UniProtKB-SubCell"/>
</dbReference>
<dbReference type="GO" id="GO:0005524">
    <property type="term" value="F:ATP binding"/>
    <property type="evidence" value="ECO:0007669"/>
    <property type="project" value="UniProtKB-UniRule"/>
</dbReference>
<dbReference type="GO" id="GO:0016887">
    <property type="term" value="F:ATP hydrolysis activity"/>
    <property type="evidence" value="ECO:0007669"/>
    <property type="project" value="UniProtKB-UniRule"/>
</dbReference>
<dbReference type="GO" id="GO:0004176">
    <property type="term" value="F:ATP-dependent peptidase activity"/>
    <property type="evidence" value="ECO:0007669"/>
    <property type="project" value="UniProtKB-UniRule"/>
</dbReference>
<dbReference type="GO" id="GO:0043565">
    <property type="term" value="F:sequence-specific DNA binding"/>
    <property type="evidence" value="ECO:0007669"/>
    <property type="project" value="UniProtKB-UniRule"/>
</dbReference>
<dbReference type="GO" id="GO:0004252">
    <property type="term" value="F:serine-type endopeptidase activity"/>
    <property type="evidence" value="ECO:0007669"/>
    <property type="project" value="UniProtKB-UniRule"/>
</dbReference>
<dbReference type="GO" id="GO:0034605">
    <property type="term" value="P:cellular response to heat"/>
    <property type="evidence" value="ECO:0007669"/>
    <property type="project" value="UniProtKB-UniRule"/>
</dbReference>
<dbReference type="GO" id="GO:0006515">
    <property type="term" value="P:protein quality control for misfolded or incompletely synthesized proteins"/>
    <property type="evidence" value="ECO:0007669"/>
    <property type="project" value="UniProtKB-UniRule"/>
</dbReference>
<dbReference type="CDD" id="cd19500">
    <property type="entry name" value="RecA-like_Lon"/>
    <property type="match status" value="1"/>
</dbReference>
<dbReference type="FunFam" id="1.20.5.5270:FF:000002">
    <property type="entry name" value="Lon protease homolog"/>
    <property type="match status" value="1"/>
</dbReference>
<dbReference type="FunFam" id="3.40.50.300:FF:000382">
    <property type="entry name" value="Lon protease homolog 2, peroxisomal"/>
    <property type="match status" value="1"/>
</dbReference>
<dbReference type="Gene3D" id="1.10.8.60">
    <property type="match status" value="1"/>
</dbReference>
<dbReference type="Gene3D" id="1.20.5.5270">
    <property type="match status" value="1"/>
</dbReference>
<dbReference type="Gene3D" id="1.20.58.1480">
    <property type="match status" value="1"/>
</dbReference>
<dbReference type="Gene3D" id="3.30.230.10">
    <property type="match status" value="1"/>
</dbReference>
<dbReference type="Gene3D" id="2.30.130.40">
    <property type="entry name" value="LON domain-like"/>
    <property type="match status" value="1"/>
</dbReference>
<dbReference type="Gene3D" id="3.40.50.300">
    <property type="entry name" value="P-loop containing nucleotide triphosphate hydrolases"/>
    <property type="match status" value="1"/>
</dbReference>
<dbReference type="HAMAP" id="MF_01973">
    <property type="entry name" value="lon_bact"/>
    <property type="match status" value="1"/>
</dbReference>
<dbReference type="InterPro" id="IPR003593">
    <property type="entry name" value="AAA+_ATPase"/>
</dbReference>
<dbReference type="InterPro" id="IPR003959">
    <property type="entry name" value="ATPase_AAA_core"/>
</dbReference>
<dbReference type="InterPro" id="IPR027543">
    <property type="entry name" value="Lon_bac"/>
</dbReference>
<dbReference type="InterPro" id="IPR004815">
    <property type="entry name" value="Lon_bac/euk-typ"/>
</dbReference>
<dbReference type="InterPro" id="IPR054594">
    <property type="entry name" value="Lon_lid"/>
</dbReference>
<dbReference type="InterPro" id="IPR008269">
    <property type="entry name" value="Lon_proteolytic"/>
</dbReference>
<dbReference type="InterPro" id="IPR027065">
    <property type="entry name" value="Lon_Prtase"/>
</dbReference>
<dbReference type="InterPro" id="IPR003111">
    <property type="entry name" value="Lon_prtase_N"/>
</dbReference>
<dbReference type="InterPro" id="IPR046336">
    <property type="entry name" value="Lon_prtase_N_sf"/>
</dbReference>
<dbReference type="InterPro" id="IPR027417">
    <property type="entry name" value="P-loop_NTPase"/>
</dbReference>
<dbReference type="InterPro" id="IPR008268">
    <property type="entry name" value="Peptidase_S16_AS"/>
</dbReference>
<dbReference type="InterPro" id="IPR015947">
    <property type="entry name" value="PUA-like_sf"/>
</dbReference>
<dbReference type="InterPro" id="IPR020568">
    <property type="entry name" value="Ribosomal_Su5_D2-typ_SF"/>
</dbReference>
<dbReference type="InterPro" id="IPR014721">
    <property type="entry name" value="Ribsml_uS5_D2-typ_fold_subgr"/>
</dbReference>
<dbReference type="NCBIfam" id="TIGR00763">
    <property type="entry name" value="lon"/>
    <property type="match status" value="1"/>
</dbReference>
<dbReference type="PANTHER" id="PTHR10046">
    <property type="entry name" value="ATP DEPENDENT LON PROTEASE FAMILY MEMBER"/>
    <property type="match status" value="1"/>
</dbReference>
<dbReference type="Pfam" id="PF00004">
    <property type="entry name" value="AAA"/>
    <property type="match status" value="1"/>
</dbReference>
<dbReference type="Pfam" id="PF05362">
    <property type="entry name" value="Lon_C"/>
    <property type="match status" value="1"/>
</dbReference>
<dbReference type="Pfam" id="PF22667">
    <property type="entry name" value="Lon_lid"/>
    <property type="match status" value="1"/>
</dbReference>
<dbReference type="Pfam" id="PF02190">
    <property type="entry name" value="LON_substr_bdg"/>
    <property type="match status" value="1"/>
</dbReference>
<dbReference type="PIRSF" id="PIRSF001174">
    <property type="entry name" value="Lon_proteas"/>
    <property type="match status" value="1"/>
</dbReference>
<dbReference type="PRINTS" id="PR00830">
    <property type="entry name" value="ENDOLAPTASE"/>
</dbReference>
<dbReference type="SMART" id="SM00382">
    <property type="entry name" value="AAA"/>
    <property type="match status" value="1"/>
</dbReference>
<dbReference type="SMART" id="SM00464">
    <property type="entry name" value="LON"/>
    <property type="match status" value="1"/>
</dbReference>
<dbReference type="SUPFAM" id="SSF52540">
    <property type="entry name" value="P-loop containing nucleoside triphosphate hydrolases"/>
    <property type="match status" value="1"/>
</dbReference>
<dbReference type="SUPFAM" id="SSF88697">
    <property type="entry name" value="PUA domain-like"/>
    <property type="match status" value="1"/>
</dbReference>
<dbReference type="SUPFAM" id="SSF54211">
    <property type="entry name" value="Ribosomal protein S5 domain 2-like"/>
    <property type="match status" value="1"/>
</dbReference>
<dbReference type="PROSITE" id="PS51787">
    <property type="entry name" value="LON_N"/>
    <property type="match status" value="1"/>
</dbReference>
<dbReference type="PROSITE" id="PS51786">
    <property type="entry name" value="LON_PROTEOLYTIC"/>
    <property type="match status" value="1"/>
</dbReference>
<dbReference type="PROSITE" id="PS01046">
    <property type="entry name" value="LON_SER"/>
    <property type="match status" value="1"/>
</dbReference>
<name>LON2_BDEBA</name>
<protein>
    <recommendedName>
        <fullName evidence="1">Lon protease 2</fullName>
        <ecNumber evidence="1">3.4.21.53</ecNumber>
    </recommendedName>
    <alternativeName>
        <fullName evidence="1">ATP-dependent protease La 2</fullName>
    </alternativeName>
</protein>
<feature type="chain" id="PRO_0000396537" description="Lon protease 2">
    <location>
        <begin position="1"/>
        <end position="801"/>
    </location>
</feature>
<feature type="domain" description="Lon N-terminal" evidence="3">
    <location>
        <begin position="14"/>
        <end position="209"/>
    </location>
</feature>
<feature type="domain" description="Lon proteolytic" evidence="2">
    <location>
        <begin position="597"/>
        <end position="778"/>
    </location>
</feature>
<feature type="region of interest" description="Disordered" evidence="4">
    <location>
        <begin position="780"/>
        <end position="801"/>
    </location>
</feature>
<feature type="compositionally biased region" description="Basic and acidic residues" evidence="4">
    <location>
        <begin position="780"/>
        <end position="791"/>
    </location>
</feature>
<feature type="compositionally biased region" description="Basic residues" evidence="4">
    <location>
        <begin position="792"/>
        <end position="801"/>
    </location>
</feature>
<feature type="active site" evidence="1">
    <location>
        <position position="684"/>
    </location>
</feature>
<feature type="active site" evidence="1">
    <location>
        <position position="727"/>
    </location>
</feature>
<feature type="binding site" evidence="1">
    <location>
        <begin position="361"/>
        <end position="368"/>
    </location>
    <ligand>
        <name>ATP</name>
        <dbReference type="ChEBI" id="CHEBI:30616"/>
    </ligand>
</feature>
<gene>
    <name evidence="1" type="primary">lon2</name>
    <name type="ordered locus">Bd3876</name>
</gene>
<proteinExistence type="inferred from homology"/>